<accession>P39740</accession>
<name>FLIT_BACSU</name>
<evidence type="ECO:0000250" key="1"/>
<evidence type="ECO:0000255" key="2"/>
<evidence type="ECO:0000305" key="3"/>
<keyword id="KW-1005">Bacterial flagellum biogenesis</keyword>
<keyword id="KW-0143">Chaperone</keyword>
<keyword id="KW-0175">Coiled coil</keyword>
<keyword id="KW-0963">Cytoplasm</keyword>
<keyword id="KW-1185">Reference proteome</keyword>
<proteinExistence type="evidence at protein level"/>
<feature type="chain" id="PRO_0000180978" description="Flagellar protein FliT">
    <location>
        <begin position="1"/>
        <end position="113"/>
    </location>
</feature>
<feature type="coiled-coil region" evidence="2">
    <location>
        <begin position="25"/>
        <end position="90"/>
    </location>
</feature>
<protein>
    <recommendedName>
        <fullName>Flagellar protein FliT</fullName>
    </recommendedName>
</protein>
<sequence>MNNIDQLYTETKSMLSHIQNTPESDELLKQIEDFVATRSELIQEISLPLSEEERKQMKLILTWDQLIVKEMERLKQSIATELQQMKRKRVMHTTYLNPYNNITIDGTYYDKRK</sequence>
<comment type="function">
    <text>May act as an export chaperone for the filament capping protein FliD.</text>
</comment>
<comment type="subunit">
    <text evidence="1">Homodimer.</text>
</comment>
<comment type="interaction">
    <interactant intactId="EBI-15858561">
        <id>P39740</id>
    </interactant>
    <interactant intactId="EBI-15858644">
        <id>P39738</id>
        <label>fliD</label>
    </interactant>
    <organismsDiffer>false</organismsDiffer>
    <experiments>2</experiments>
</comment>
<comment type="subcellular location">
    <subcellularLocation>
        <location evidence="3">Cytoplasm</location>
        <location evidence="3">Cytosol</location>
    </subcellularLocation>
</comment>
<comment type="similarity">
    <text evidence="3">Belongs to the bacillales FliT family.</text>
</comment>
<organism>
    <name type="scientific">Bacillus subtilis (strain 168)</name>
    <dbReference type="NCBI Taxonomy" id="224308"/>
    <lineage>
        <taxon>Bacteria</taxon>
        <taxon>Bacillati</taxon>
        <taxon>Bacillota</taxon>
        <taxon>Bacilli</taxon>
        <taxon>Bacillales</taxon>
        <taxon>Bacillaceae</taxon>
        <taxon>Bacillus</taxon>
    </lineage>
</organism>
<reference key="1">
    <citation type="journal article" date="1994" name="J. Bacteriol.">
        <title>The Bacillus subtilis sigma D-dependent operon encoding the flagellar proteins FliD, FliS, and FliT.</title>
        <authorList>
            <person name="Chen L."/>
            <person name="Helmann J.D."/>
        </authorList>
    </citation>
    <scope>NUCLEOTIDE SEQUENCE [GENOMIC DNA]</scope>
    <source>
        <strain>168 / HB2058</strain>
    </source>
</reference>
<reference key="2">
    <citation type="journal article" date="1996" name="Microbiology">
        <title>Sequence of the 305 degrees-307 degrees region of the Bacillus subtilis chromosome.</title>
        <authorList>
            <person name="Soldo B."/>
            <person name="Lazarevic V."/>
            <person name="Mauel C."/>
            <person name="Karamata D."/>
        </authorList>
    </citation>
    <scope>NUCLEOTIDE SEQUENCE [GENOMIC DNA]</scope>
    <source>
        <strain>168</strain>
    </source>
</reference>
<reference key="3">
    <citation type="journal article" date="1997" name="Nature">
        <title>The complete genome sequence of the Gram-positive bacterium Bacillus subtilis.</title>
        <authorList>
            <person name="Kunst F."/>
            <person name="Ogasawara N."/>
            <person name="Moszer I."/>
            <person name="Albertini A.M."/>
            <person name="Alloni G."/>
            <person name="Azevedo V."/>
            <person name="Bertero M.G."/>
            <person name="Bessieres P."/>
            <person name="Bolotin A."/>
            <person name="Borchert S."/>
            <person name="Borriss R."/>
            <person name="Boursier L."/>
            <person name="Brans A."/>
            <person name="Braun M."/>
            <person name="Brignell S.C."/>
            <person name="Bron S."/>
            <person name="Brouillet S."/>
            <person name="Bruschi C.V."/>
            <person name="Caldwell B."/>
            <person name="Capuano V."/>
            <person name="Carter N.M."/>
            <person name="Choi S.-K."/>
            <person name="Codani J.-J."/>
            <person name="Connerton I.F."/>
            <person name="Cummings N.J."/>
            <person name="Daniel R.A."/>
            <person name="Denizot F."/>
            <person name="Devine K.M."/>
            <person name="Duesterhoeft A."/>
            <person name="Ehrlich S.D."/>
            <person name="Emmerson P.T."/>
            <person name="Entian K.-D."/>
            <person name="Errington J."/>
            <person name="Fabret C."/>
            <person name="Ferrari E."/>
            <person name="Foulger D."/>
            <person name="Fritz C."/>
            <person name="Fujita M."/>
            <person name="Fujita Y."/>
            <person name="Fuma S."/>
            <person name="Galizzi A."/>
            <person name="Galleron N."/>
            <person name="Ghim S.-Y."/>
            <person name="Glaser P."/>
            <person name="Goffeau A."/>
            <person name="Golightly E.J."/>
            <person name="Grandi G."/>
            <person name="Guiseppi G."/>
            <person name="Guy B.J."/>
            <person name="Haga K."/>
            <person name="Haiech J."/>
            <person name="Harwood C.R."/>
            <person name="Henaut A."/>
            <person name="Hilbert H."/>
            <person name="Holsappel S."/>
            <person name="Hosono S."/>
            <person name="Hullo M.-F."/>
            <person name="Itaya M."/>
            <person name="Jones L.-M."/>
            <person name="Joris B."/>
            <person name="Karamata D."/>
            <person name="Kasahara Y."/>
            <person name="Klaerr-Blanchard M."/>
            <person name="Klein C."/>
            <person name="Kobayashi Y."/>
            <person name="Koetter P."/>
            <person name="Koningstein G."/>
            <person name="Krogh S."/>
            <person name="Kumano M."/>
            <person name="Kurita K."/>
            <person name="Lapidus A."/>
            <person name="Lardinois S."/>
            <person name="Lauber J."/>
            <person name="Lazarevic V."/>
            <person name="Lee S.-M."/>
            <person name="Levine A."/>
            <person name="Liu H."/>
            <person name="Masuda S."/>
            <person name="Mauel C."/>
            <person name="Medigue C."/>
            <person name="Medina N."/>
            <person name="Mellado R.P."/>
            <person name="Mizuno M."/>
            <person name="Moestl D."/>
            <person name="Nakai S."/>
            <person name="Noback M."/>
            <person name="Noone D."/>
            <person name="O'Reilly M."/>
            <person name="Ogawa K."/>
            <person name="Ogiwara A."/>
            <person name="Oudega B."/>
            <person name="Park S.-H."/>
            <person name="Parro V."/>
            <person name="Pohl T.M."/>
            <person name="Portetelle D."/>
            <person name="Porwollik S."/>
            <person name="Prescott A.M."/>
            <person name="Presecan E."/>
            <person name="Pujic P."/>
            <person name="Purnelle B."/>
            <person name="Rapoport G."/>
            <person name="Rey M."/>
            <person name="Reynolds S."/>
            <person name="Rieger M."/>
            <person name="Rivolta C."/>
            <person name="Rocha E."/>
            <person name="Roche B."/>
            <person name="Rose M."/>
            <person name="Sadaie Y."/>
            <person name="Sato T."/>
            <person name="Scanlan E."/>
            <person name="Schleich S."/>
            <person name="Schroeter R."/>
            <person name="Scoffone F."/>
            <person name="Sekiguchi J."/>
            <person name="Sekowska A."/>
            <person name="Seror S.J."/>
            <person name="Serror P."/>
            <person name="Shin B.-S."/>
            <person name="Soldo B."/>
            <person name="Sorokin A."/>
            <person name="Tacconi E."/>
            <person name="Takagi T."/>
            <person name="Takahashi H."/>
            <person name="Takemaru K."/>
            <person name="Takeuchi M."/>
            <person name="Tamakoshi A."/>
            <person name="Tanaka T."/>
            <person name="Terpstra P."/>
            <person name="Tognoni A."/>
            <person name="Tosato V."/>
            <person name="Uchiyama S."/>
            <person name="Vandenbol M."/>
            <person name="Vannier F."/>
            <person name="Vassarotti A."/>
            <person name="Viari A."/>
            <person name="Wambutt R."/>
            <person name="Wedler E."/>
            <person name="Wedler H."/>
            <person name="Weitzenegger T."/>
            <person name="Winters P."/>
            <person name="Wipat A."/>
            <person name="Yamamoto H."/>
            <person name="Yamane K."/>
            <person name="Yasumoto K."/>
            <person name="Yata K."/>
            <person name="Yoshida K."/>
            <person name="Yoshikawa H.-F."/>
            <person name="Zumstein E."/>
            <person name="Yoshikawa H."/>
            <person name="Danchin A."/>
        </authorList>
    </citation>
    <scope>NUCLEOTIDE SEQUENCE [LARGE SCALE GENOMIC DNA]</scope>
    <source>
        <strain>168</strain>
    </source>
</reference>
<dbReference type="EMBL" id="Z31376">
    <property type="protein sequence ID" value="CAA83250.1"/>
    <property type="molecule type" value="Genomic_DNA"/>
</dbReference>
<dbReference type="EMBL" id="U56901">
    <property type="protein sequence ID" value="AAC44955.1"/>
    <property type="molecule type" value="Genomic_DNA"/>
</dbReference>
<dbReference type="EMBL" id="AL009126">
    <property type="protein sequence ID" value="CAB15549.1"/>
    <property type="molecule type" value="Genomic_DNA"/>
</dbReference>
<dbReference type="PIR" id="I40399">
    <property type="entry name" value="I40399"/>
</dbReference>
<dbReference type="RefSeq" id="NP_391412.1">
    <property type="nucleotide sequence ID" value="NC_000964.3"/>
</dbReference>
<dbReference type="RefSeq" id="WP_003242603.1">
    <property type="nucleotide sequence ID" value="NZ_OZ025638.1"/>
</dbReference>
<dbReference type="SMR" id="P39740"/>
<dbReference type="DIP" id="DIP-59543N"/>
<dbReference type="FunCoup" id="P39740">
    <property type="interactions" value="98"/>
</dbReference>
<dbReference type="IntAct" id="P39740">
    <property type="interactions" value="2"/>
</dbReference>
<dbReference type="STRING" id="224308.BSU35320"/>
<dbReference type="PaxDb" id="224308-BSU35320"/>
<dbReference type="EnsemblBacteria" id="CAB15549">
    <property type="protein sequence ID" value="CAB15549"/>
    <property type="gene ID" value="BSU_35320"/>
</dbReference>
<dbReference type="GeneID" id="936718"/>
<dbReference type="KEGG" id="bsu:BSU35320"/>
<dbReference type="PATRIC" id="fig|224308.179.peg.3823"/>
<dbReference type="InParanoid" id="P39740"/>
<dbReference type="OrthoDB" id="2353131at2"/>
<dbReference type="BioCyc" id="BSUB:BSU35320-MONOMER"/>
<dbReference type="Proteomes" id="UP000001570">
    <property type="component" value="Chromosome"/>
</dbReference>
<dbReference type="GO" id="GO:0005829">
    <property type="term" value="C:cytosol"/>
    <property type="evidence" value="ECO:0007669"/>
    <property type="project" value="UniProtKB-SubCell"/>
</dbReference>
<dbReference type="GO" id="GO:0044781">
    <property type="term" value="P:bacterial-type flagellum organization"/>
    <property type="evidence" value="ECO:0007669"/>
    <property type="project" value="UniProtKB-KW"/>
</dbReference>
<gene>
    <name type="primary">fliT</name>
    <name type="ordered locus">BSU35320</name>
</gene>